<protein>
    <recommendedName>
        <fullName evidence="1">Tetraacyldisaccharide 4'-kinase</fullName>
        <ecNumber evidence="1">2.7.1.130</ecNumber>
    </recommendedName>
    <alternativeName>
        <fullName evidence="1">Lipid A 4'-kinase</fullName>
    </alternativeName>
</protein>
<proteinExistence type="inferred from homology"/>
<dbReference type="EC" id="2.7.1.130" evidence="1"/>
<dbReference type="EMBL" id="CP000868">
    <property type="protein sequence ID" value="ABX14446.1"/>
    <property type="molecule type" value="Genomic_DNA"/>
</dbReference>
<dbReference type="EMBL" id="AP009385">
    <property type="protein sequence ID" value="BAG44400.1"/>
    <property type="molecule type" value="Genomic_DNA"/>
</dbReference>
<dbReference type="RefSeq" id="WP_012212840.1">
    <property type="nucleotide sequence ID" value="NC_010084.1"/>
</dbReference>
<dbReference type="SMR" id="A9AGK4"/>
<dbReference type="STRING" id="395019.BMULJ_02509"/>
<dbReference type="KEGG" id="bmj:BMULJ_02509"/>
<dbReference type="KEGG" id="bmu:Bmul_0751"/>
<dbReference type="eggNOG" id="COG1663">
    <property type="taxonomic scope" value="Bacteria"/>
</dbReference>
<dbReference type="HOGENOM" id="CLU_038816_2_0_4"/>
<dbReference type="UniPathway" id="UPA00359">
    <property type="reaction ID" value="UER00482"/>
</dbReference>
<dbReference type="Proteomes" id="UP000008815">
    <property type="component" value="Chromosome 1"/>
</dbReference>
<dbReference type="GO" id="GO:0005886">
    <property type="term" value="C:plasma membrane"/>
    <property type="evidence" value="ECO:0007669"/>
    <property type="project" value="TreeGrafter"/>
</dbReference>
<dbReference type="GO" id="GO:0005524">
    <property type="term" value="F:ATP binding"/>
    <property type="evidence" value="ECO:0007669"/>
    <property type="project" value="UniProtKB-UniRule"/>
</dbReference>
<dbReference type="GO" id="GO:0009029">
    <property type="term" value="F:tetraacyldisaccharide 4'-kinase activity"/>
    <property type="evidence" value="ECO:0007669"/>
    <property type="project" value="UniProtKB-UniRule"/>
</dbReference>
<dbReference type="GO" id="GO:0009245">
    <property type="term" value="P:lipid A biosynthetic process"/>
    <property type="evidence" value="ECO:0007669"/>
    <property type="project" value="UniProtKB-UniRule"/>
</dbReference>
<dbReference type="GO" id="GO:0009244">
    <property type="term" value="P:lipopolysaccharide core region biosynthetic process"/>
    <property type="evidence" value="ECO:0007669"/>
    <property type="project" value="TreeGrafter"/>
</dbReference>
<dbReference type="HAMAP" id="MF_00409">
    <property type="entry name" value="LpxK"/>
    <property type="match status" value="1"/>
</dbReference>
<dbReference type="InterPro" id="IPR003758">
    <property type="entry name" value="LpxK"/>
</dbReference>
<dbReference type="InterPro" id="IPR027417">
    <property type="entry name" value="P-loop_NTPase"/>
</dbReference>
<dbReference type="NCBIfam" id="TIGR00682">
    <property type="entry name" value="lpxK"/>
    <property type="match status" value="1"/>
</dbReference>
<dbReference type="PANTHER" id="PTHR42724">
    <property type="entry name" value="TETRAACYLDISACCHARIDE 4'-KINASE"/>
    <property type="match status" value="1"/>
</dbReference>
<dbReference type="PANTHER" id="PTHR42724:SF1">
    <property type="entry name" value="TETRAACYLDISACCHARIDE 4'-KINASE, MITOCHONDRIAL-RELATED"/>
    <property type="match status" value="1"/>
</dbReference>
<dbReference type="Pfam" id="PF02606">
    <property type="entry name" value="LpxK"/>
    <property type="match status" value="1"/>
</dbReference>
<dbReference type="SUPFAM" id="SSF52540">
    <property type="entry name" value="P-loop containing nucleoside triphosphate hydrolases"/>
    <property type="match status" value="1"/>
</dbReference>
<feature type="chain" id="PRO_1000191525" description="Tetraacyldisaccharide 4'-kinase">
    <location>
        <begin position="1"/>
        <end position="342"/>
    </location>
</feature>
<feature type="binding site" evidence="1">
    <location>
        <begin position="68"/>
        <end position="75"/>
    </location>
    <ligand>
        <name>ATP</name>
        <dbReference type="ChEBI" id="CHEBI:30616"/>
    </ligand>
</feature>
<evidence type="ECO:0000255" key="1">
    <source>
        <dbReference type="HAMAP-Rule" id="MF_00409"/>
    </source>
</evidence>
<reference key="1">
    <citation type="submission" date="2007-10" db="EMBL/GenBank/DDBJ databases">
        <title>Complete sequence of chromosome 1 of Burkholderia multivorans ATCC 17616.</title>
        <authorList>
            <person name="Copeland A."/>
            <person name="Lucas S."/>
            <person name="Lapidus A."/>
            <person name="Barry K."/>
            <person name="Glavina del Rio T."/>
            <person name="Dalin E."/>
            <person name="Tice H."/>
            <person name="Pitluck S."/>
            <person name="Chain P."/>
            <person name="Malfatti S."/>
            <person name="Shin M."/>
            <person name="Vergez L."/>
            <person name="Schmutz J."/>
            <person name="Larimer F."/>
            <person name="Land M."/>
            <person name="Hauser L."/>
            <person name="Kyrpides N."/>
            <person name="Kim E."/>
            <person name="Tiedje J."/>
            <person name="Richardson P."/>
        </authorList>
    </citation>
    <scope>NUCLEOTIDE SEQUENCE [LARGE SCALE GENOMIC DNA]</scope>
    <source>
        <strain>ATCC 17616 / 249</strain>
    </source>
</reference>
<reference key="2">
    <citation type="submission" date="2007-04" db="EMBL/GenBank/DDBJ databases">
        <title>Complete genome sequence of Burkholderia multivorans ATCC 17616.</title>
        <authorList>
            <person name="Ohtsubo Y."/>
            <person name="Yamashita A."/>
            <person name="Kurokawa K."/>
            <person name="Takami H."/>
            <person name="Yuhara S."/>
            <person name="Nishiyama E."/>
            <person name="Endo R."/>
            <person name="Miyazaki R."/>
            <person name="Ono A."/>
            <person name="Yano K."/>
            <person name="Ito M."/>
            <person name="Sota M."/>
            <person name="Yuji N."/>
            <person name="Hattori M."/>
            <person name="Tsuda M."/>
        </authorList>
    </citation>
    <scope>NUCLEOTIDE SEQUENCE [LARGE SCALE GENOMIC DNA]</scope>
    <source>
        <strain>ATCC 17616 / 249</strain>
    </source>
</reference>
<accession>A9AGK4</accession>
<sequence length="342" mass="36312">MSAAGGLLARLETRVTREWQRRSAFAWALTPFACAFGLCAALRRTAYARGWKQAVDVGVPVVVVGNVTVGGTGKTPTVIALVDALRAAGFTPGVVSRGYGANVKTPTAVTPASRAGAAGDEPLLIARRTGAPVWVCPDRVAAAQALRAAHPDVDVIVSDDGLQHYRLARTVELVVFDHRLGGNGFLLPAGPLREPLSRHRDATLVNDPYSGALPPWPDTYSLALTPGAAWHLDQPTLRRPLSQFANERVLAAAGIGAPERFFATLRAAGLAPATRALPDHYAFADNPFVDDAVDAILITEKDAVKLGASWRDARLWVVPVEAALDPRLIALVVEKLRGRSPA</sequence>
<gene>
    <name evidence="1" type="primary">lpxK</name>
    <name type="ordered locus">Bmul_0751</name>
    <name type="ordered locus">BMULJ_02509</name>
</gene>
<keyword id="KW-0067">ATP-binding</keyword>
<keyword id="KW-0418">Kinase</keyword>
<keyword id="KW-0441">Lipid A biosynthesis</keyword>
<keyword id="KW-0444">Lipid biosynthesis</keyword>
<keyword id="KW-0443">Lipid metabolism</keyword>
<keyword id="KW-0547">Nucleotide-binding</keyword>
<keyword id="KW-1185">Reference proteome</keyword>
<keyword id="KW-0808">Transferase</keyword>
<comment type="function">
    <text evidence="1">Transfers the gamma-phosphate of ATP to the 4'-position of a tetraacyldisaccharide 1-phosphate intermediate (termed DS-1-P) to form tetraacyldisaccharide 1,4'-bis-phosphate (lipid IVA).</text>
</comment>
<comment type="catalytic activity">
    <reaction evidence="1">
        <text>a lipid A disaccharide + ATP = a lipid IVA + ADP + H(+)</text>
        <dbReference type="Rhea" id="RHEA:67840"/>
        <dbReference type="ChEBI" id="CHEBI:15378"/>
        <dbReference type="ChEBI" id="CHEBI:30616"/>
        <dbReference type="ChEBI" id="CHEBI:176343"/>
        <dbReference type="ChEBI" id="CHEBI:176425"/>
        <dbReference type="ChEBI" id="CHEBI:456216"/>
        <dbReference type="EC" id="2.7.1.130"/>
    </reaction>
</comment>
<comment type="pathway">
    <text evidence="1">Glycolipid biosynthesis; lipid IV(A) biosynthesis; lipid IV(A) from (3R)-3-hydroxytetradecanoyl-[acyl-carrier-protein] and UDP-N-acetyl-alpha-D-glucosamine: step 6/6.</text>
</comment>
<comment type="similarity">
    <text evidence="1">Belongs to the LpxK family.</text>
</comment>
<organism>
    <name type="scientific">Burkholderia multivorans (strain ATCC 17616 / 249)</name>
    <dbReference type="NCBI Taxonomy" id="395019"/>
    <lineage>
        <taxon>Bacteria</taxon>
        <taxon>Pseudomonadati</taxon>
        <taxon>Pseudomonadota</taxon>
        <taxon>Betaproteobacteria</taxon>
        <taxon>Burkholderiales</taxon>
        <taxon>Burkholderiaceae</taxon>
        <taxon>Burkholderia</taxon>
        <taxon>Burkholderia cepacia complex</taxon>
    </lineage>
</organism>
<name>LPXK_BURM1</name>